<reference key="1">
    <citation type="journal article" date="2007" name="Autophagy">
        <title>ATG genes involved in non-selective autophagy are conserved from yeast to man, but the selective Cvt and pexophagy pathways also require organism-specific genes.</title>
        <authorList>
            <person name="Meijer W.H."/>
            <person name="van der Klei I.J."/>
            <person name="Veenhuis M."/>
            <person name="Kiel J.A.K.W."/>
        </authorList>
    </citation>
    <scope>NUCLEOTIDE SEQUENCE [GENOMIC DNA]</scope>
    <scope>FUNCTION</scope>
</reference>
<reference key="2">
    <citation type="journal article" date="2008" name="Nat. Biotechnol.">
        <title>Genome sequencing and analysis of the filamentous fungus Penicillium chrysogenum.</title>
        <authorList>
            <person name="van den Berg M.A."/>
            <person name="Albang R."/>
            <person name="Albermann K."/>
            <person name="Badger J.H."/>
            <person name="Daran J.-M."/>
            <person name="Driessen A.J.M."/>
            <person name="Garcia-Estrada C."/>
            <person name="Fedorova N.D."/>
            <person name="Harris D.M."/>
            <person name="Heijne W.H.M."/>
            <person name="Joardar V.S."/>
            <person name="Kiel J.A.K.W."/>
            <person name="Kovalchuk A."/>
            <person name="Martin J.F."/>
            <person name="Nierman W.C."/>
            <person name="Nijland J.G."/>
            <person name="Pronk J.T."/>
            <person name="Roubos J.A."/>
            <person name="van der Klei I.J."/>
            <person name="van Peij N.N.M.E."/>
            <person name="Veenhuis M."/>
            <person name="von Doehren H."/>
            <person name="Wagner C."/>
            <person name="Wortman J.R."/>
            <person name="Bovenberg R.A.L."/>
        </authorList>
    </citation>
    <scope>NUCLEOTIDE SEQUENCE [LARGE SCALE GENOMIC DNA]</scope>
    <source>
        <strain>ATCC 28089 / DSM 1075 / NRRL 1951 / Wisconsin 54-1255</strain>
    </source>
</reference>
<evidence type="ECO:0000250" key="1">
    <source>
        <dbReference type="UniProtKB" id="O74312"/>
    </source>
</evidence>
<evidence type="ECO:0000250" key="2">
    <source>
        <dbReference type="UniProtKB" id="Q12142"/>
    </source>
</evidence>
<evidence type="ECO:0000255" key="3"/>
<evidence type="ECO:0000256" key="4">
    <source>
        <dbReference type="SAM" id="MobiDB-lite"/>
    </source>
</evidence>
<evidence type="ECO:0000269" key="5">
    <source>
    </source>
</evidence>
<evidence type="ECO:0000305" key="6"/>
<proteinExistence type="inferred from homology"/>
<name>ATG9_PENRW</name>
<comment type="function">
    <text evidence="2 5">Phospholipid scramblase involved in autophagy and cytoplasm to vacuole transport (Cvt) vesicle formation (PubMed:17204848). Cycles between the preautophagosomal structure/phagophore assembly site (PAS) and the cytoplasmic vesicle pool and supplies membrane for the growing autophagosome. Lipid scramblase activity plays a key role in preautophagosomal structure/phagophore assembly by distributing the phospholipids that arrive through atg2 from the cytoplasmic to the luminal leaflet of the bilayer, thereby driving autophagosomal membrane expansion. Required for mitophagy. Also involved in endoplasmic reticulum-specific autophagic process and is essential for the survival of cells subjected to severe ER stress. Different machineries are required for anterograde trafficking to the PAS during either the Cvt pathway or bulk autophagy and for retrograde trafficking (By similarity).</text>
</comment>
<comment type="catalytic activity">
    <reaction evidence="2">
        <text>a 1,2-diacyl-sn-glycero-3-phosphocholine(in) = a 1,2-diacyl-sn-glycero-3-phosphocholine(out)</text>
        <dbReference type="Rhea" id="RHEA:38571"/>
        <dbReference type="ChEBI" id="CHEBI:57643"/>
    </reaction>
</comment>
<comment type="catalytic activity">
    <reaction evidence="2">
        <text>a 1,2-diacyl-sn-glycero-3-phospho-L-serine(in) = a 1,2-diacyl-sn-glycero-3-phospho-L-serine(out)</text>
        <dbReference type="Rhea" id="RHEA:38663"/>
        <dbReference type="ChEBI" id="CHEBI:57262"/>
    </reaction>
</comment>
<comment type="catalytic activity">
    <reaction evidence="2">
        <text>a 1,2-diacyl-sn-glycero-3-phosphoethanolamine(in) = a 1,2-diacyl-sn-glycero-3-phosphoethanolamine(out)</text>
        <dbReference type="Rhea" id="RHEA:38895"/>
        <dbReference type="ChEBI" id="CHEBI:64612"/>
    </reaction>
</comment>
<comment type="catalytic activity">
    <reaction evidence="2">
        <text>a 1,2-diacyl-sn-glycero-3-phospho-(1D-myo-inositol-3-phosphate)(in) = a 1,2-diacyl-sn-glycero-3-phospho-(1D-myo-inositol-3-phosphate)(out)</text>
        <dbReference type="Rhea" id="RHEA:67920"/>
        <dbReference type="ChEBI" id="CHEBI:58088"/>
    </reaction>
</comment>
<comment type="subunit">
    <text evidence="1">Homotrimer; forms a homotrimer with a central pore that forms a path between the two membrane leaflets.</text>
</comment>
<comment type="subcellular location">
    <subcellularLocation>
        <location evidence="2">Preautophagosomal structure membrane</location>
        <topology evidence="2">Multi-pass membrane protein</topology>
    </subcellularLocation>
    <subcellularLocation>
        <location evidence="2">Cytoplasmic vesicle membrane</location>
        <topology evidence="2">Multi-pass membrane protein</topology>
    </subcellularLocation>
    <subcellularLocation>
        <location evidence="2">Golgi apparatus membrane</location>
        <topology evidence="2">Multi-pass membrane protein</topology>
    </subcellularLocation>
    <subcellularLocation>
        <location evidence="2">Endoplasmic reticulum membrane</location>
        <topology evidence="2">Multi-pass membrane protein</topology>
    </subcellularLocation>
</comment>
<comment type="domain">
    <text evidence="1">Forms a homotrimer with a solvated central pore, which is connected laterally to the cytosol through the cavity within each protomer. Acts as a lipid scramblase that uses its central pore to function: the central pore opens laterally to accommodate lipid headgroups, thereby enabling lipid flipping and redistribution of lipids added to the outer leaflet of atg9-containing vesicles, thereby enabling growth into autophagosomes.</text>
</comment>
<comment type="PTM">
    <text evidence="2">Phosphorylated by atg1. Atg1 phosphorylation is required for preautophagosome elongation.</text>
</comment>
<comment type="similarity">
    <text evidence="6">Belongs to the ATG9 family.</text>
</comment>
<sequence>MMSSNILSRFLPPTGSPSVYETIRQHDAGSEYSDLEERAGLVIEDQQEQYSDRELEDALADAQDSEIVSPSTALLNQARSVKAPEERASPSGTRRRKSSRPRWMAQESPLGYELDDHDEDVPQSLLVEGHHEDLKPRLPPPPQSHNRSDRRRTPSPGPSSRPTEARWNERGVHQQPPPSESGHPIGRWFTGQHPGLANVDPKKKAMWRWANVEDLDNFLKDVYVYFLGNGIWSILLTRVLNLLTFAFVVGFSTFLTNCIDYPKVRRSKTLNDILVPQCTANMSGSSTFLLWLFSFFWIGKLFQYLLDIRRLKHLHDFYLYLLGVSDAEVQTISWQEVVSRLMALRDSNPSTAAAVSAKHRRFLGSQSKQRMDAHDIANRLMRKENYMIALVNKDILDLTLPIPFLKNRQLFSRTMEWNLNLCVMDYVFNEQGQLRTLFLKDTHRRALSDGLRRRFIFAGVMNIFVAPFIVVYFMMHYFFRYFNEFKKNPGQIGSRQYTPMAEWKFREFNELWHLFERRINMSYPFASRYIDQFPKDKTVQVARFVAFISGALASVLALASVIDPELFLGFEITHDRTVLFYLGIFGTVWAFARGLAPEETDVFDPEYALLELIDFTHYFPSGWKGRLHSDDVRKEFAILYQMKIVIFLEEILSMIFTPFVLWFSLPKCSDRLIDFFREFTVHVDGVGYLCSFAVFDFKKGTNVLSQAGPGRRDPGKQDLRTDYFSTKDGKMLASYYGFLDNYGTTHQATSRRPFHPPPTLPTLGSPTAGGFGALPDRPDHLQTRLGPTPGAPFGPQSMIGTSKPRQMGGFDHRSPAPSILLDPHHQPSTTGFRAAARIAPQQHQRSRLGRSHHPSTDPIDDEEEPLSQDGHDSTTRQSGARTGTSSAGAGTSDSNLGDSWRMNPLSNDEDEGDEGENIDAIAGGGGVLGLIQQFQKANTEGRRTNVGI</sequence>
<keyword id="KW-0072">Autophagy</keyword>
<keyword id="KW-0968">Cytoplasmic vesicle</keyword>
<keyword id="KW-0256">Endoplasmic reticulum</keyword>
<keyword id="KW-0333">Golgi apparatus</keyword>
<keyword id="KW-0445">Lipid transport</keyword>
<keyword id="KW-0472">Membrane</keyword>
<keyword id="KW-0597">Phosphoprotein</keyword>
<keyword id="KW-1185">Reference proteome</keyword>
<keyword id="KW-0812">Transmembrane</keyword>
<keyword id="KW-1133">Transmembrane helix</keyword>
<keyword id="KW-0813">Transport</keyword>
<dbReference type="EMBL" id="EF107742">
    <property type="protein sequence ID" value="ABO31080.1"/>
    <property type="molecule type" value="Genomic_DNA"/>
</dbReference>
<dbReference type="EMBL" id="AM920437">
    <property type="protein sequence ID" value="CAP97692.1"/>
    <property type="molecule type" value="Genomic_DNA"/>
</dbReference>
<dbReference type="RefSeq" id="XP_002564443.1">
    <property type="nucleotide sequence ID" value="XM_002564397.1"/>
</dbReference>
<dbReference type="SMR" id="A7KAM0"/>
<dbReference type="STRING" id="500485.A7KAM0"/>
<dbReference type="GeneID" id="8306163"/>
<dbReference type="KEGG" id="pcs:N7525_005813"/>
<dbReference type="VEuPathDB" id="FungiDB:PCH_Pc22g04040"/>
<dbReference type="eggNOG" id="KOG2173">
    <property type="taxonomic scope" value="Eukaryota"/>
</dbReference>
<dbReference type="HOGENOM" id="CLU_006200_1_1_1"/>
<dbReference type="OMA" id="MMHYFFR"/>
<dbReference type="OrthoDB" id="2020634at2759"/>
<dbReference type="BioCyc" id="PCHR:PC22G04040-MONOMER"/>
<dbReference type="Proteomes" id="UP000000724">
    <property type="component" value="Contig Pc00c22"/>
</dbReference>
<dbReference type="GO" id="GO:0005776">
    <property type="term" value="C:autophagosome"/>
    <property type="evidence" value="ECO:0007669"/>
    <property type="project" value="TreeGrafter"/>
</dbReference>
<dbReference type="GO" id="GO:0030659">
    <property type="term" value="C:cytoplasmic vesicle membrane"/>
    <property type="evidence" value="ECO:0007669"/>
    <property type="project" value="UniProtKB-SubCell"/>
</dbReference>
<dbReference type="GO" id="GO:0005789">
    <property type="term" value="C:endoplasmic reticulum membrane"/>
    <property type="evidence" value="ECO:0007669"/>
    <property type="project" value="UniProtKB-SubCell"/>
</dbReference>
<dbReference type="GO" id="GO:0000139">
    <property type="term" value="C:Golgi membrane"/>
    <property type="evidence" value="ECO:0007669"/>
    <property type="project" value="UniProtKB-SubCell"/>
</dbReference>
<dbReference type="GO" id="GO:0034045">
    <property type="term" value="C:phagophore assembly site membrane"/>
    <property type="evidence" value="ECO:0007669"/>
    <property type="project" value="UniProtKB-SubCell"/>
</dbReference>
<dbReference type="GO" id="GO:0000422">
    <property type="term" value="P:autophagy of mitochondrion"/>
    <property type="evidence" value="ECO:0007669"/>
    <property type="project" value="TreeGrafter"/>
</dbReference>
<dbReference type="GO" id="GO:0006869">
    <property type="term" value="P:lipid transport"/>
    <property type="evidence" value="ECO:0007669"/>
    <property type="project" value="UniProtKB-KW"/>
</dbReference>
<dbReference type="GO" id="GO:0034727">
    <property type="term" value="P:piecemeal microautophagy of the nucleus"/>
    <property type="evidence" value="ECO:0007669"/>
    <property type="project" value="TreeGrafter"/>
</dbReference>
<dbReference type="GO" id="GO:0034497">
    <property type="term" value="P:protein localization to phagophore assembly site"/>
    <property type="evidence" value="ECO:0007669"/>
    <property type="project" value="TreeGrafter"/>
</dbReference>
<dbReference type="GO" id="GO:0061709">
    <property type="term" value="P:reticulophagy"/>
    <property type="evidence" value="ECO:0007669"/>
    <property type="project" value="TreeGrafter"/>
</dbReference>
<dbReference type="InterPro" id="IPR007241">
    <property type="entry name" value="Autophagy-rel_prot_9"/>
</dbReference>
<dbReference type="PANTHER" id="PTHR13038">
    <property type="entry name" value="APG9 AUTOPHAGY 9"/>
    <property type="match status" value="1"/>
</dbReference>
<dbReference type="PANTHER" id="PTHR13038:SF10">
    <property type="entry name" value="AUTOPHAGY-RELATED PROTEIN 9"/>
    <property type="match status" value="1"/>
</dbReference>
<dbReference type="Pfam" id="PF04109">
    <property type="entry name" value="ATG9"/>
    <property type="match status" value="1"/>
</dbReference>
<feature type="chain" id="PRO_0000317911" description="Autophagy-related protein 9">
    <location>
        <begin position="1"/>
        <end position="948"/>
    </location>
</feature>
<feature type="topological domain" description="Cytoplasmic" evidence="6">
    <location>
        <begin position="1"/>
        <end position="230"/>
    </location>
</feature>
<feature type="transmembrane region" description="Helical" evidence="3">
    <location>
        <begin position="231"/>
        <end position="251"/>
    </location>
</feature>
<feature type="topological domain" description="Lumenal" evidence="6">
    <location>
        <begin position="252"/>
        <end position="287"/>
    </location>
</feature>
<feature type="transmembrane region" description="Helical" evidence="3">
    <location>
        <begin position="288"/>
        <end position="308"/>
    </location>
</feature>
<feature type="topological domain" description="Cytoplasmic" evidence="6">
    <location>
        <begin position="309"/>
        <end position="454"/>
    </location>
</feature>
<feature type="intramembrane region" evidence="1">
    <location>
        <begin position="455"/>
        <end position="475"/>
    </location>
</feature>
<feature type="topological domain" description="Cytoplasmic" evidence="6">
    <location>
        <begin position="476"/>
        <end position="543"/>
    </location>
</feature>
<feature type="transmembrane region" description="Helical" evidence="3">
    <location>
        <begin position="544"/>
        <end position="564"/>
    </location>
</feature>
<feature type="topological domain" description="Lumenal" evidence="6">
    <location>
        <begin position="565"/>
        <end position="576"/>
    </location>
</feature>
<feature type="transmembrane region" description="Helical" evidence="3">
    <location>
        <begin position="577"/>
        <end position="597"/>
    </location>
</feature>
<feature type="topological domain" description="Cytoplasmic" evidence="6">
    <location>
        <begin position="598"/>
        <end position="643"/>
    </location>
</feature>
<feature type="intramembrane region" evidence="1">
    <location>
        <begin position="644"/>
        <end position="664"/>
    </location>
</feature>
<feature type="topological domain" description="Cytoplasmic" evidence="6">
    <location>
        <begin position="665"/>
        <end position="948"/>
    </location>
</feature>
<feature type="region of interest" description="Disordered" evidence="4">
    <location>
        <begin position="1"/>
        <end position="20"/>
    </location>
</feature>
<feature type="region of interest" description="Disordered" evidence="4">
    <location>
        <begin position="46"/>
        <end position="104"/>
    </location>
</feature>
<feature type="region of interest" description="Disordered" evidence="4">
    <location>
        <begin position="130"/>
        <end position="193"/>
    </location>
</feature>
<feature type="region of interest" description="Disordered" evidence="4">
    <location>
        <begin position="762"/>
        <end position="923"/>
    </location>
</feature>
<feature type="compositionally biased region" description="Polar residues" evidence="4">
    <location>
        <begin position="66"/>
        <end position="79"/>
    </location>
</feature>
<feature type="compositionally biased region" description="Basic and acidic residues" evidence="4">
    <location>
        <begin position="163"/>
        <end position="172"/>
    </location>
</feature>
<feature type="compositionally biased region" description="Basic residues" evidence="4">
    <location>
        <begin position="844"/>
        <end position="853"/>
    </location>
</feature>
<feature type="compositionally biased region" description="Low complexity" evidence="4">
    <location>
        <begin position="878"/>
        <end position="892"/>
    </location>
</feature>
<feature type="compositionally biased region" description="Acidic residues" evidence="4">
    <location>
        <begin position="907"/>
        <end position="917"/>
    </location>
</feature>
<protein>
    <recommendedName>
        <fullName>Autophagy-related protein 9</fullName>
    </recommendedName>
</protein>
<accession>A7KAM0</accession>
<accession>B6HSL8</accession>
<organism>
    <name type="scientific">Penicillium rubens (strain ATCC 28089 / DSM 1075 / NRRL 1951 / Wisconsin 54-1255)</name>
    <name type="common">Penicillium chrysogenum</name>
    <dbReference type="NCBI Taxonomy" id="500485"/>
    <lineage>
        <taxon>Eukaryota</taxon>
        <taxon>Fungi</taxon>
        <taxon>Dikarya</taxon>
        <taxon>Ascomycota</taxon>
        <taxon>Pezizomycotina</taxon>
        <taxon>Eurotiomycetes</taxon>
        <taxon>Eurotiomycetidae</taxon>
        <taxon>Eurotiales</taxon>
        <taxon>Aspergillaceae</taxon>
        <taxon>Penicillium</taxon>
        <taxon>Penicillium chrysogenum species complex</taxon>
    </lineage>
</organism>
<gene>
    <name type="primary">atg9</name>
    <name type="ORF">Pc22g04040</name>
</gene>